<keyword id="KW-0119">Carbohydrate metabolism</keyword>
<keyword id="KW-0313">Glucose metabolism</keyword>
<keyword id="KW-0378">Hydrolase</keyword>
<protein>
    <recommendedName>
        <fullName evidence="1">6-phosphogluconolactonase</fullName>
        <shortName evidence="1">6-P-gluconolactonase</shortName>
        <ecNumber evidence="1">3.1.1.31</ecNumber>
    </recommendedName>
</protein>
<feature type="chain" id="PRO_1000148162" description="6-phosphogluconolactonase">
    <location>
        <begin position="1"/>
        <end position="331"/>
    </location>
</feature>
<comment type="function">
    <text evidence="1">Catalyzes the hydrolysis of 6-phosphogluconolactone to 6-phosphogluconate.</text>
</comment>
<comment type="catalytic activity">
    <reaction evidence="1">
        <text>6-phospho-D-glucono-1,5-lactone + H2O = 6-phospho-D-gluconate + H(+)</text>
        <dbReference type="Rhea" id="RHEA:12556"/>
        <dbReference type="ChEBI" id="CHEBI:15377"/>
        <dbReference type="ChEBI" id="CHEBI:15378"/>
        <dbReference type="ChEBI" id="CHEBI:57955"/>
        <dbReference type="ChEBI" id="CHEBI:58759"/>
        <dbReference type="EC" id="3.1.1.31"/>
    </reaction>
</comment>
<comment type="pathway">
    <text evidence="1">Carbohydrate degradation; pentose phosphate pathway; D-ribulose 5-phosphate from D-glucose 6-phosphate (oxidative stage): step 2/3.</text>
</comment>
<comment type="similarity">
    <text evidence="1">Belongs to the cycloisomerase 2 family.</text>
</comment>
<evidence type="ECO:0000255" key="1">
    <source>
        <dbReference type="HAMAP-Rule" id="MF_01605"/>
    </source>
</evidence>
<proteinExistence type="inferred from homology"/>
<reference key="1">
    <citation type="journal article" date="2011" name="J. Bacteriol.">
        <title>Comparative genomics of 28 Salmonella enterica isolates: evidence for CRISPR-mediated adaptive sublineage evolution.</title>
        <authorList>
            <person name="Fricke W.F."/>
            <person name="Mammel M.K."/>
            <person name="McDermott P.F."/>
            <person name="Tartera C."/>
            <person name="White D.G."/>
            <person name="Leclerc J.E."/>
            <person name="Ravel J."/>
            <person name="Cebula T.A."/>
        </authorList>
    </citation>
    <scope>NUCLEOTIDE SEQUENCE [LARGE SCALE GENOMIC DNA]</scope>
    <source>
        <strain>CT_02021853</strain>
    </source>
</reference>
<dbReference type="EC" id="3.1.1.31" evidence="1"/>
<dbReference type="EMBL" id="CP001144">
    <property type="protein sequence ID" value="ACH77622.1"/>
    <property type="molecule type" value="Genomic_DNA"/>
</dbReference>
<dbReference type="RefSeq" id="WP_000815468.1">
    <property type="nucleotide sequence ID" value="NC_011205.1"/>
</dbReference>
<dbReference type="SMR" id="B5FP52"/>
<dbReference type="KEGG" id="sed:SeD_A0880"/>
<dbReference type="HOGENOM" id="CLU_038716_2_0_6"/>
<dbReference type="UniPathway" id="UPA00115">
    <property type="reaction ID" value="UER00409"/>
</dbReference>
<dbReference type="Proteomes" id="UP000008322">
    <property type="component" value="Chromosome"/>
</dbReference>
<dbReference type="GO" id="GO:0005829">
    <property type="term" value="C:cytosol"/>
    <property type="evidence" value="ECO:0007669"/>
    <property type="project" value="TreeGrafter"/>
</dbReference>
<dbReference type="GO" id="GO:0017057">
    <property type="term" value="F:6-phosphogluconolactonase activity"/>
    <property type="evidence" value="ECO:0007669"/>
    <property type="project" value="UniProtKB-UniRule"/>
</dbReference>
<dbReference type="GO" id="GO:0006006">
    <property type="term" value="P:glucose metabolic process"/>
    <property type="evidence" value="ECO:0007669"/>
    <property type="project" value="UniProtKB-KW"/>
</dbReference>
<dbReference type="GO" id="GO:0009051">
    <property type="term" value="P:pentose-phosphate shunt, oxidative branch"/>
    <property type="evidence" value="ECO:0007669"/>
    <property type="project" value="UniProtKB-UniRule"/>
</dbReference>
<dbReference type="FunFam" id="2.130.10.10:FF:000051">
    <property type="entry name" value="6-phosphogluconolactonase"/>
    <property type="match status" value="1"/>
</dbReference>
<dbReference type="Gene3D" id="2.130.10.10">
    <property type="entry name" value="YVTN repeat-like/Quinoprotein amine dehydrogenase"/>
    <property type="match status" value="1"/>
</dbReference>
<dbReference type="HAMAP" id="MF_01605">
    <property type="entry name" value="6P_gluconolactonase"/>
    <property type="match status" value="1"/>
</dbReference>
<dbReference type="InterPro" id="IPR022528">
    <property type="entry name" value="6-phosphogluconolactonase_YbhE"/>
</dbReference>
<dbReference type="InterPro" id="IPR050282">
    <property type="entry name" value="Cycloisomerase_2"/>
</dbReference>
<dbReference type="InterPro" id="IPR019405">
    <property type="entry name" value="Lactonase_7-beta_prop"/>
</dbReference>
<dbReference type="InterPro" id="IPR011045">
    <property type="entry name" value="N2O_reductase_N"/>
</dbReference>
<dbReference type="InterPro" id="IPR015943">
    <property type="entry name" value="WD40/YVTN_repeat-like_dom_sf"/>
</dbReference>
<dbReference type="NCBIfam" id="NF008258">
    <property type="entry name" value="PRK11028.1"/>
    <property type="match status" value="1"/>
</dbReference>
<dbReference type="PANTHER" id="PTHR30344:SF1">
    <property type="entry name" value="6-PHOSPHOGLUCONOLACTONASE"/>
    <property type="match status" value="1"/>
</dbReference>
<dbReference type="PANTHER" id="PTHR30344">
    <property type="entry name" value="6-PHOSPHOGLUCONOLACTONASE-RELATED"/>
    <property type="match status" value="1"/>
</dbReference>
<dbReference type="Pfam" id="PF10282">
    <property type="entry name" value="Lactonase"/>
    <property type="match status" value="1"/>
</dbReference>
<dbReference type="SUPFAM" id="SSF50974">
    <property type="entry name" value="Nitrous oxide reductase, N-terminal domain"/>
    <property type="match status" value="2"/>
</dbReference>
<name>6PGL_SALDC</name>
<sequence>MKQTVYTASPESQQIHVWSLNHEGTLTLVQVVDVPGQVQPMVVSPDKRYLYVGVRPEFRVLAYRIAPDDGALTFAAESALPGSPTHISTDHHGRFVFVGSYNAGNVSVTRLQDGLPVELVDVVEGLDGCHSANITPDNRTLWVPALKQDRICLFTLSDDGHLVAQEPAEVNTVEGAGPRHMVFHPNRQYAYCVNELNSSVDVWQLKNPHGEIECVQTLDMMPADFSDTRWAADIHITPDGRHLYACDRTASLITVFSVSEDGSVLSVEGFQPTEAQPRGFNIDNSGKYLIAAGQKSHHIAVYEITGTQGLLTEKGRYAVGQGPMWVVVNAY</sequence>
<organism>
    <name type="scientific">Salmonella dublin (strain CT_02021853)</name>
    <dbReference type="NCBI Taxonomy" id="439851"/>
    <lineage>
        <taxon>Bacteria</taxon>
        <taxon>Pseudomonadati</taxon>
        <taxon>Pseudomonadota</taxon>
        <taxon>Gammaproteobacteria</taxon>
        <taxon>Enterobacterales</taxon>
        <taxon>Enterobacteriaceae</taxon>
        <taxon>Salmonella</taxon>
    </lineage>
</organism>
<gene>
    <name evidence="1" type="primary">pgl</name>
    <name type="ordered locus">SeD_A0880</name>
</gene>
<accession>B5FP52</accession>